<evidence type="ECO:0000255" key="1">
    <source>
        <dbReference type="HAMAP-Rule" id="MF_01813"/>
    </source>
</evidence>
<dbReference type="EC" id="2.1.1.163" evidence="1"/>
<dbReference type="EC" id="2.1.1.201" evidence="1"/>
<dbReference type="EMBL" id="AE003852">
    <property type="protein sequence ID" value="AAF93261.1"/>
    <property type="molecule type" value="Genomic_DNA"/>
</dbReference>
<dbReference type="PIR" id="D82366">
    <property type="entry name" value="D82366"/>
</dbReference>
<dbReference type="RefSeq" id="NP_229742.1">
    <property type="nucleotide sequence ID" value="NC_002505.1"/>
</dbReference>
<dbReference type="RefSeq" id="WP_000132703.1">
    <property type="nucleotide sequence ID" value="NZ_LT906614.1"/>
</dbReference>
<dbReference type="SMR" id="Q9KVQ6"/>
<dbReference type="STRING" id="243277.VC_0083"/>
<dbReference type="DNASU" id="2614882"/>
<dbReference type="EnsemblBacteria" id="AAF93261">
    <property type="protein sequence ID" value="AAF93261"/>
    <property type="gene ID" value="VC_0083"/>
</dbReference>
<dbReference type="GeneID" id="89513178"/>
<dbReference type="KEGG" id="vch:VC_0083"/>
<dbReference type="PATRIC" id="fig|243277.26.peg.80"/>
<dbReference type="eggNOG" id="COG2226">
    <property type="taxonomic scope" value="Bacteria"/>
</dbReference>
<dbReference type="HOGENOM" id="CLU_037990_0_0_6"/>
<dbReference type="UniPathway" id="UPA00079">
    <property type="reaction ID" value="UER00169"/>
</dbReference>
<dbReference type="UniPathway" id="UPA00232"/>
<dbReference type="Proteomes" id="UP000000584">
    <property type="component" value="Chromosome 1"/>
</dbReference>
<dbReference type="GO" id="GO:0008425">
    <property type="term" value="F:2-methoxy-6-polyprenyl-1,4-benzoquinol methyltransferase activity"/>
    <property type="evidence" value="ECO:0000318"/>
    <property type="project" value="GO_Central"/>
</dbReference>
<dbReference type="GO" id="GO:0043770">
    <property type="term" value="F:demethylmenaquinone methyltransferase activity"/>
    <property type="evidence" value="ECO:0007669"/>
    <property type="project" value="UniProtKB-UniRule"/>
</dbReference>
<dbReference type="GO" id="GO:0009060">
    <property type="term" value="P:aerobic respiration"/>
    <property type="evidence" value="ECO:0007669"/>
    <property type="project" value="UniProtKB-UniRule"/>
</dbReference>
<dbReference type="GO" id="GO:0009234">
    <property type="term" value="P:menaquinone biosynthetic process"/>
    <property type="evidence" value="ECO:0007669"/>
    <property type="project" value="UniProtKB-UniRule"/>
</dbReference>
<dbReference type="GO" id="GO:0032259">
    <property type="term" value="P:methylation"/>
    <property type="evidence" value="ECO:0007669"/>
    <property type="project" value="UniProtKB-KW"/>
</dbReference>
<dbReference type="GO" id="GO:0006744">
    <property type="term" value="P:ubiquinone biosynthetic process"/>
    <property type="evidence" value="ECO:0000318"/>
    <property type="project" value="GO_Central"/>
</dbReference>
<dbReference type="CDD" id="cd02440">
    <property type="entry name" value="AdoMet_MTases"/>
    <property type="match status" value="1"/>
</dbReference>
<dbReference type="FunFam" id="3.40.50.150:FF:000014">
    <property type="entry name" value="Ubiquinone/menaquinone biosynthesis C-methyltransferase UbiE"/>
    <property type="match status" value="1"/>
</dbReference>
<dbReference type="Gene3D" id="3.40.50.150">
    <property type="entry name" value="Vaccinia Virus protein VP39"/>
    <property type="match status" value="1"/>
</dbReference>
<dbReference type="HAMAP" id="MF_01813">
    <property type="entry name" value="MenG_UbiE_methyltr"/>
    <property type="match status" value="1"/>
</dbReference>
<dbReference type="InterPro" id="IPR029063">
    <property type="entry name" value="SAM-dependent_MTases_sf"/>
</dbReference>
<dbReference type="InterPro" id="IPR004033">
    <property type="entry name" value="UbiE/COQ5_MeTrFase"/>
</dbReference>
<dbReference type="InterPro" id="IPR023576">
    <property type="entry name" value="UbiE/COQ5_MeTrFase_CS"/>
</dbReference>
<dbReference type="NCBIfam" id="TIGR01934">
    <property type="entry name" value="MenG_MenH_UbiE"/>
    <property type="match status" value="1"/>
</dbReference>
<dbReference type="NCBIfam" id="NF001240">
    <property type="entry name" value="PRK00216.1-1"/>
    <property type="match status" value="1"/>
</dbReference>
<dbReference type="NCBIfam" id="NF001244">
    <property type="entry name" value="PRK00216.1-5"/>
    <property type="match status" value="1"/>
</dbReference>
<dbReference type="PANTHER" id="PTHR43591:SF24">
    <property type="entry name" value="2-METHOXY-6-POLYPRENYL-1,4-BENZOQUINOL METHYLASE, MITOCHONDRIAL"/>
    <property type="match status" value="1"/>
</dbReference>
<dbReference type="PANTHER" id="PTHR43591">
    <property type="entry name" value="METHYLTRANSFERASE"/>
    <property type="match status" value="1"/>
</dbReference>
<dbReference type="Pfam" id="PF01209">
    <property type="entry name" value="Ubie_methyltran"/>
    <property type="match status" value="1"/>
</dbReference>
<dbReference type="SUPFAM" id="SSF53335">
    <property type="entry name" value="S-adenosyl-L-methionine-dependent methyltransferases"/>
    <property type="match status" value="1"/>
</dbReference>
<dbReference type="PROSITE" id="PS51608">
    <property type="entry name" value="SAM_MT_UBIE"/>
    <property type="match status" value="1"/>
</dbReference>
<dbReference type="PROSITE" id="PS01183">
    <property type="entry name" value="UBIE_1"/>
    <property type="match status" value="1"/>
</dbReference>
<dbReference type="PROSITE" id="PS01184">
    <property type="entry name" value="UBIE_2"/>
    <property type="match status" value="1"/>
</dbReference>
<proteinExistence type="inferred from homology"/>
<comment type="function">
    <text evidence="1">Methyltransferase required for the conversion of demethylmenaquinol (DMKH2) to menaquinol (MKH2) and the conversion of 2-polyprenyl-6-methoxy-1,4-benzoquinol (DDMQH2) to 2-polyprenyl-3-methyl-6-methoxy-1,4-benzoquinol (DMQH2).</text>
</comment>
<comment type="catalytic activity">
    <reaction evidence="1">
        <text>a 2-demethylmenaquinol + S-adenosyl-L-methionine = a menaquinol + S-adenosyl-L-homocysteine + H(+)</text>
        <dbReference type="Rhea" id="RHEA:42640"/>
        <dbReference type="Rhea" id="RHEA-COMP:9539"/>
        <dbReference type="Rhea" id="RHEA-COMP:9563"/>
        <dbReference type="ChEBI" id="CHEBI:15378"/>
        <dbReference type="ChEBI" id="CHEBI:18151"/>
        <dbReference type="ChEBI" id="CHEBI:55437"/>
        <dbReference type="ChEBI" id="CHEBI:57856"/>
        <dbReference type="ChEBI" id="CHEBI:59789"/>
        <dbReference type="EC" id="2.1.1.163"/>
    </reaction>
</comment>
<comment type="catalytic activity">
    <reaction evidence="1">
        <text>a 2-methoxy-6-(all-trans-polyprenyl)benzene-1,4-diol + S-adenosyl-L-methionine = a 5-methoxy-2-methyl-3-(all-trans-polyprenyl)benzene-1,4-diol + S-adenosyl-L-homocysteine + H(+)</text>
        <dbReference type="Rhea" id="RHEA:28286"/>
        <dbReference type="Rhea" id="RHEA-COMP:10858"/>
        <dbReference type="Rhea" id="RHEA-COMP:10859"/>
        <dbReference type="ChEBI" id="CHEBI:15378"/>
        <dbReference type="ChEBI" id="CHEBI:57856"/>
        <dbReference type="ChEBI" id="CHEBI:59789"/>
        <dbReference type="ChEBI" id="CHEBI:84166"/>
        <dbReference type="ChEBI" id="CHEBI:84167"/>
        <dbReference type="EC" id="2.1.1.201"/>
    </reaction>
</comment>
<comment type="pathway">
    <text evidence="1">Quinol/quinone metabolism; menaquinone biosynthesis; menaquinol from 1,4-dihydroxy-2-naphthoate: step 2/2.</text>
</comment>
<comment type="pathway">
    <text evidence="1">Cofactor biosynthesis; ubiquinone biosynthesis.</text>
</comment>
<comment type="similarity">
    <text evidence="1">Belongs to the class I-like SAM-binding methyltransferase superfamily. MenG/UbiE family.</text>
</comment>
<protein>
    <recommendedName>
        <fullName evidence="1">Ubiquinone/menaquinone biosynthesis C-methyltransferase UbiE</fullName>
        <ecNumber evidence="1">2.1.1.163</ecNumber>
        <ecNumber evidence="1">2.1.1.201</ecNumber>
    </recommendedName>
    <alternativeName>
        <fullName evidence="1">2-methoxy-6-polyprenyl-1,4-benzoquinol methylase</fullName>
    </alternativeName>
    <alternativeName>
        <fullName evidence="1">Demethylmenaquinone methyltransferase</fullName>
    </alternativeName>
</protein>
<name>UBIE_VIBCH</name>
<keyword id="KW-0474">Menaquinone biosynthesis</keyword>
<keyword id="KW-0489">Methyltransferase</keyword>
<keyword id="KW-1185">Reference proteome</keyword>
<keyword id="KW-0949">S-adenosyl-L-methionine</keyword>
<keyword id="KW-0808">Transferase</keyword>
<keyword id="KW-0831">Ubiquinone biosynthesis</keyword>
<organism>
    <name type="scientific">Vibrio cholerae serotype O1 (strain ATCC 39315 / El Tor Inaba N16961)</name>
    <dbReference type="NCBI Taxonomy" id="243277"/>
    <lineage>
        <taxon>Bacteria</taxon>
        <taxon>Pseudomonadati</taxon>
        <taxon>Pseudomonadota</taxon>
        <taxon>Gammaproteobacteria</taxon>
        <taxon>Vibrionales</taxon>
        <taxon>Vibrionaceae</taxon>
        <taxon>Vibrio</taxon>
    </lineage>
</organism>
<accession>Q9KVQ6</accession>
<gene>
    <name evidence="1" type="primary">ubiE</name>
    <name type="ordered locus">VC_0083</name>
</gene>
<feature type="chain" id="PRO_0000193347" description="Ubiquinone/menaquinone biosynthesis C-methyltransferase UbiE">
    <location>
        <begin position="1"/>
        <end position="260"/>
    </location>
</feature>
<feature type="binding site" evidence="1">
    <location>
        <position position="83"/>
    </location>
    <ligand>
        <name>S-adenosyl-L-methionine</name>
        <dbReference type="ChEBI" id="CHEBI:59789"/>
    </ligand>
</feature>
<feature type="binding site" evidence="1">
    <location>
        <position position="104"/>
    </location>
    <ligand>
        <name>S-adenosyl-L-methionine</name>
        <dbReference type="ChEBI" id="CHEBI:59789"/>
    </ligand>
</feature>
<feature type="binding site" evidence="1">
    <location>
        <begin position="132"/>
        <end position="133"/>
    </location>
    <ligand>
        <name>S-adenosyl-L-methionine</name>
        <dbReference type="ChEBI" id="CHEBI:59789"/>
    </ligand>
</feature>
<feature type="binding site" evidence="1">
    <location>
        <position position="149"/>
    </location>
    <ligand>
        <name>S-adenosyl-L-methionine</name>
        <dbReference type="ChEBI" id="CHEBI:59789"/>
    </ligand>
</feature>
<reference key="1">
    <citation type="journal article" date="2000" name="Nature">
        <title>DNA sequence of both chromosomes of the cholera pathogen Vibrio cholerae.</title>
        <authorList>
            <person name="Heidelberg J.F."/>
            <person name="Eisen J.A."/>
            <person name="Nelson W.C."/>
            <person name="Clayton R.A."/>
            <person name="Gwinn M.L."/>
            <person name="Dodson R.J."/>
            <person name="Haft D.H."/>
            <person name="Hickey E.K."/>
            <person name="Peterson J.D."/>
            <person name="Umayam L.A."/>
            <person name="Gill S.R."/>
            <person name="Nelson K.E."/>
            <person name="Read T.D."/>
            <person name="Tettelin H."/>
            <person name="Richardson D.L."/>
            <person name="Ermolaeva M.D."/>
            <person name="Vamathevan J.J."/>
            <person name="Bass S."/>
            <person name="Qin H."/>
            <person name="Dragoi I."/>
            <person name="Sellers P."/>
            <person name="McDonald L.A."/>
            <person name="Utterback T.R."/>
            <person name="Fleischmann R.D."/>
            <person name="Nierman W.C."/>
            <person name="White O."/>
            <person name="Salzberg S.L."/>
            <person name="Smith H.O."/>
            <person name="Colwell R.R."/>
            <person name="Mekalanos J.J."/>
            <person name="Venter J.C."/>
            <person name="Fraser C.M."/>
        </authorList>
    </citation>
    <scope>NUCLEOTIDE SEQUENCE [LARGE SCALE GENOMIC DNA]</scope>
    <source>
        <strain>ATCC 39315 / El Tor Inaba N16961</strain>
    </source>
</reference>
<sequence length="260" mass="29217">MTDTNVLANSATDNQETTHFGFETVRKDEKVHKVAQVFHSVAAKYDIMNDLMSGGIHRLWKRFTIDCSGARPGQRILDLGGGTGDLTAKFSRIVGEKGHVILADINNSMLNVGRDKLRDSGVVGNVHYVQANAEELPFPDNYFDCITISFCLRNVTDKDKALRSMFRVLKPGGRLLVLEFSKPILEPLSKLYDTYSFHILPKMGQLIANDADSYRYLAESIRMHPDQETLKGMMEEAGFEQTTYYNLTGGIVALHRGYKF</sequence>